<accession>Q7W197</accession>
<comment type="function">
    <text evidence="1">Catalyzes the reversible isomerization of glucose-6-phosphate to fructose-6-phosphate.</text>
</comment>
<comment type="catalytic activity">
    <reaction evidence="1">
        <text>alpha-D-glucose 6-phosphate = beta-D-fructose 6-phosphate</text>
        <dbReference type="Rhea" id="RHEA:11816"/>
        <dbReference type="ChEBI" id="CHEBI:57634"/>
        <dbReference type="ChEBI" id="CHEBI:58225"/>
        <dbReference type="EC" id="5.3.1.9"/>
    </reaction>
</comment>
<comment type="pathway">
    <text evidence="1">Carbohydrate biosynthesis; gluconeogenesis.</text>
</comment>
<comment type="pathway">
    <text evidence="1">Carbohydrate degradation; glycolysis; D-glyceraldehyde 3-phosphate and glycerone phosphate from D-glucose: step 2/4.</text>
</comment>
<comment type="subcellular location">
    <subcellularLocation>
        <location evidence="1">Cytoplasm</location>
    </subcellularLocation>
</comment>
<comment type="similarity">
    <text evidence="1">Belongs to the GPI family.</text>
</comment>
<organism>
    <name type="scientific">Bordetella parapertussis (strain 12822 / ATCC BAA-587 / NCTC 13253)</name>
    <dbReference type="NCBI Taxonomy" id="257311"/>
    <lineage>
        <taxon>Bacteria</taxon>
        <taxon>Pseudomonadati</taxon>
        <taxon>Pseudomonadota</taxon>
        <taxon>Betaproteobacteria</taxon>
        <taxon>Burkholderiales</taxon>
        <taxon>Alcaligenaceae</taxon>
        <taxon>Bordetella</taxon>
    </lineage>
</organism>
<name>G6PI_BORPA</name>
<reference key="1">
    <citation type="journal article" date="2003" name="Nat. Genet.">
        <title>Comparative analysis of the genome sequences of Bordetella pertussis, Bordetella parapertussis and Bordetella bronchiseptica.</title>
        <authorList>
            <person name="Parkhill J."/>
            <person name="Sebaihia M."/>
            <person name="Preston A."/>
            <person name="Murphy L.D."/>
            <person name="Thomson N.R."/>
            <person name="Harris D.E."/>
            <person name="Holden M.T.G."/>
            <person name="Churcher C.M."/>
            <person name="Bentley S.D."/>
            <person name="Mungall K.L."/>
            <person name="Cerdeno-Tarraga A.-M."/>
            <person name="Temple L."/>
            <person name="James K.D."/>
            <person name="Harris B."/>
            <person name="Quail M.A."/>
            <person name="Achtman M."/>
            <person name="Atkin R."/>
            <person name="Baker S."/>
            <person name="Basham D."/>
            <person name="Bason N."/>
            <person name="Cherevach I."/>
            <person name="Chillingworth T."/>
            <person name="Collins M."/>
            <person name="Cronin A."/>
            <person name="Davis P."/>
            <person name="Doggett J."/>
            <person name="Feltwell T."/>
            <person name="Goble A."/>
            <person name="Hamlin N."/>
            <person name="Hauser H."/>
            <person name="Holroyd S."/>
            <person name="Jagels K."/>
            <person name="Leather S."/>
            <person name="Moule S."/>
            <person name="Norberczak H."/>
            <person name="O'Neil S."/>
            <person name="Ormond D."/>
            <person name="Price C."/>
            <person name="Rabbinowitsch E."/>
            <person name="Rutter S."/>
            <person name="Sanders M."/>
            <person name="Saunders D."/>
            <person name="Seeger K."/>
            <person name="Sharp S."/>
            <person name="Simmonds M."/>
            <person name="Skelton J."/>
            <person name="Squares R."/>
            <person name="Squares S."/>
            <person name="Stevens K."/>
            <person name="Unwin L."/>
            <person name="Whitehead S."/>
            <person name="Barrell B.G."/>
            <person name="Maskell D.J."/>
        </authorList>
    </citation>
    <scope>NUCLEOTIDE SEQUENCE [LARGE SCALE GENOMIC DNA]</scope>
    <source>
        <strain>12822 / ATCC BAA-587 / NCTC 13253</strain>
    </source>
</reference>
<dbReference type="EC" id="5.3.1.9" evidence="1"/>
<dbReference type="EMBL" id="BX640425">
    <property type="protein sequence ID" value="CAE40208.1"/>
    <property type="molecule type" value="Genomic_DNA"/>
</dbReference>
<dbReference type="RefSeq" id="WP_003808462.1">
    <property type="nucleotide sequence ID" value="NC_002928.3"/>
</dbReference>
<dbReference type="SMR" id="Q7W197"/>
<dbReference type="GeneID" id="69603070"/>
<dbReference type="GeneID" id="93202549"/>
<dbReference type="KEGG" id="bpa:BPP0799"/>
<dbReference type="HOGENOM" id="CLU_017947_3_1_4"/>
<dbReference type="UniPathway" id="UPA00109">
    <property type="reaction ID" value="UER00181"/>
</dbReference>
<dbReference type="UniPathway" id="UPA00138"/>
<dbReference type="Proteomes" id="UP000001421">
    <property type="component" value="Chromosome"/>
</dbReference>
<dbReference type="GO" id="GO:0005829">
    <property type="term" value="C:cytosol"/>
    <property type="evidence" value="ECO:0007669"/>
    <property type="project" value="TreeGrafter"/>
</dbReference>
<dbReference type="GO" id="GO:0097367">
    <property type="term" value="F:carbohydrate derivative binding"/>
    <property type="evidence" value="ECO:0007669"/>
    <property type="project" value="InterPro"/>
</dbReference>
<dbReference type="GO" id="GO:0004347">
    <property type="term" value="F:glucose-6-phosphate isomerase activity"/>
    <property type="evidence" value="ECO:0007669"/>
    <property type="project" value="UniProtKB-UniRule"/>
</dbReference>
<dbReference type="GO" id="GO:0048029">
    <property type="term" value="F:monosaccharide binding"/>
    <property type="evidence" value="ECO:0007669"/>
    <property type="project" value="TreeGrafter"/>
</dbReference>
<dbReference type="GO" id="GO:0006094">
    <property type="term" value="P:gluconeogenesis"/>
    <property type="evidence" value="ECO:0007669"/>
    <property type="project" value="UniProtKB-UniRule"/>
</dbReference>
<dbReference type="GO" id="GO:0051156">
    <property type="term" value="P:glucose 6-phosphate metabolic process"/>
    <property type="evidence" value="ECO:0007669"/>
    <property type="project" value="TreeGrafter"/>
</dbReference>
<dbReference type="GO" id="GO:0006096">
    <property type="term" value="P:glycolytic process"/>
    <property type="evidence" value="ECO:0007669"/>
    <property type="project" value="UniProtKB-UniRule"/>
</dbReference>
<dbReference type="CDD" id="cd05015">
    <property type="entry name" value="SIS_PGI_1"/>
    <property type="match status" value="1"/>
</dbReference>
<dbReference type="CDD" id="cd05016">
    <property type="entry name" value="SIS_PGI_2"/>
    <property type="match status" value="1"/>
</dbReference>
<dbReference type="Gene3D" id="1.10.1390.10">
    <property type="match status" value="1"/>
</dbReference>
<dbReference type="Gene3D" id="3.40.50.10490">
    <property type="entry name" value="Glucose-6-phosphate isomerase like protein, domain 1"/>
    <property type="match status" value="2"/>
</dbReference>
<dbReference type="HAMAP" id="MF_00473">
    <property type="entry name" value="G6P_isomerase"/>
    <property type="match status" value="1"/>
</dbReference>
<dbReference type="InterPro" id="IPR001672">
    <property type="entry name" value="G6P_Isomerase"/>
</dbReference>
<dbReference type="InterPro" id="IPR023096">
    <property type="entry name" value="G6P_Isomerase_C"/>
</dbReference>
<dbReference type="InterPro" id="IPR018189">
    <property type="entry name" value="Phosphoglucose_isomerase_CS"/>
</dbReference>
<dbReference type="InterPro" id="IPR046348">
    <property type="entry name" value="SIS_dom_sf"/>
</dbReference>
<dbReference type="InterPro" id="IPR035476">
    <property type="entry name" value="SIS_PGI_1"/>
</dbReference>
<dbReference type="InterPro" id="IPR035482">
    <property type="entry name" value="SIS_PGI_2"/>
</dbReference>
<dbReference type="NCBIfam" id="NF001211">
    <property type="entry name" value="PRK00179.1"/>
    <property type="match status" value="1"/>
</dbReference>
<dbReference type="PANTHER" id="PTHR11469">
    <property type="entry name" value="GLUCOSE-6-PHOSPHATE ISOMERASE"/>
    <property type="match status" value="1"/>
</dbReference>
<dbReference type="PANTHER" id="PTHR11469:SF1">
    <property type="entry name" value="GLUCOSE-6-PHOSPHATE ISOMERASE"/>
    <property type="match status" value="1"/>
</dbReference>
<dbReference type="Pfam" id="PF00342">
    <property type="entry name" value="PGI"/>
    <property type="match status" value="1"/>
</dbReference>
<dbReference type="PRINTS" id="PR00662">
    <property type="entry name" value="G6PISOMERASE"/>
</dbReference>
<dbReference type="SUPFAM" id="SSF53697">
    <property type="entry name" value="SIS domain"/>
    <property type="match status" value="1"/>
</dbReference>
<dbReference type="PROSITE" id="PS00765">
    <property type="entry name" value="P_GLUCOSE_ISOMERASE_1"/>
    <property type="match status" value="1"/>
</dbReference>
<dbReference type="PROSITE" id="PS00174">
    <property type="entry name" value="P_GLUCOSE_ISOMERASE_2"/>
    <property type="match status" value="1"/>
</dbReference>
<dbReference type="PROSITE" id="PS51463">
    <property type="entry name" value="P_GLUCOSE_ISOMERASE_3"/>
    <property type="match status" value="1"/>
</dbReference>
<protein>
    <recommendedName>
        <fullName evidence="1">Glucose-6-phosphate isomerase</fullName>
        <shortName evidence="1">GPI</shortName>
        <ecNumber evidence="1">5.3.1.9</ecNumber>
    </recommendedName>
    <alternativeName>
        <fullName evidence="1">Phosphoglucose isomerase</fullName>
        <shortName evidence="1">PGI</shortName>
    </alternativeName>
    <alternativeName>
        <fullName evidence="1">Phosphohexose isomerase</fullName>
        <shortName evidence="1">PHI</shortName>
    </alternativeName>
</protein>
<keyword id="KW-0963">Cytoplasm</keyword>
<keyword id="KW-0312">Gluconeogenesis</keyword>
<keyword id="KW-0324">Glycolysis</keyword>
<keyword id="KW-0413">Isomerase</keyword>
<gene>
    <name evidence="1" type="primary">pgi</name>
    <name type="ordered locus">BPP0799</name>
</gene>
<sequence>MPTPLPSSSAWLAFADAARHSSRRGARLRVIEAAGLRVDLTAQAHSDDLDSAAEDLLAQQDFDNARAQLFDGGPANWTEHRPAWHTALRAARPPTPVAGAILGERDRLRRFVQDADMRGAYRHVLHLGIGGSDWGPRMVTRALRHNGLKREVRFASNVDSHAVADALHHLDPHDTLIIVASKSFTTTEPLANAEVAMNWLRNAGVADPVRQVVAITANVDAALDFGISPQHIFRFWDWVGGRYSLWSAIGLPVALALGCDALDELLAGAAAMDQHFLHTPMRRNAPLQMALAGVANRSVLGYGSLAITPYDSRLTHLVPWAQQLEMESLGKVAGHDGSPAGVPTGPVVWGMTGTDCQHTFFQWLHQDTAGAPVDFIVCEQADHPYDHFHKLLIANCLAQRAALLRGKPFDEALKEARLVESDPQQAEILAHHRVHPGGRPSTLIMLPRLSAHALGALLAMYEHKVFAQGVLWGINPFDQWGVEYGKALARNIIRELENPSSEVNQQDPSTRYWIDALRKQP</sequence>
<feature type="chain" id="PRO_0000180604" description="Glucose-6-phosphate isomerase">
    <location>
        <begin position="1"/>
        <end position="521"/>
    </location>
</feature>
<feature type="active site" description="Proton donor" evidence="1">
    <location>
        <position position="327"/>
    </location>
</feature>
<feature type="active site" evidence="1">
    <location>
        <position position="358"/>
    </location>
</feature>
<feature type="active site" evidence="1">
    <location>
        <position position="486"/>
    </location>
</feature>
<evidence type="ECO:0000255" key="1">
    <source>
        <dbReference type="HAMAP-Rule" id="MF_00473"/>
    </source>
</evidence>
<proteinExistence type="inferred from homology"/>